<feature type="chain" id="PRO_0000198592" description="Ribulose bisphosphate carboxylase small subunit">
    <location>
        <begin position="1"/>
        <end position="138"/>
    </location>
</feature>
<keyword id="KW-0113">Calvin cycle</keyword>
<keyword id="KW-0120">Carbon dioxide fixation</keyword>
<keyword id="KW-0150">Chloroplast</keyword>
<keyword id="KW-0601">Photorespiration</keyword>
<keyword id="KW-0602">Photosynthesis</keyword>
<keyword id="KW-0934">Plastid</keyword>
<accession>P37394</accession>
<accession>Q9TLY3</accession>
<evidence type="ECO:0000255" key="1">
    <source>
        <dbReference type="HAMAP-Rule" id="MF_00859"/>
    </source>
</evidence>
<evidence type="ECO:0000305" key="2"/>
<geneLocation type="chloroplast"/>
<gene>
    <name evidence="1" type="primary">rbcS</name>
</gene>
<organism>
    <name type="scientific">Cyanidium caldarium</name>
    <name type="common">Red alga</name>
    <dbReference type="NCBI Taxonomy" id="2771"/>
    <lineage>
        <taxon>Eukaryota</taxon>
        <taxon>Rhodophyta</taxon>
        <taxon>Bangiophyceae</taxon>
        <taxon>Cyanidiales</taxon>
        <taxon>Cyanidiaceae</taxon>
        <taxon>Cyanidium</taxon>
    </lineage>
</organism>
<reference key="1">
    <citation type="submission" date="1993-02" db="EMBL/GenBank/DDBJ databases">
        <title>A thioredoxin gene is located upstream of rbcLS in the unicellular red alga Cyanidium caldarium, strain RK-1.</title>
        <authorList>
            <person name="Langsdorf A."/>
            <person name="Emich A."/>
            <person name="Zetsche K."/>
        </authorList>
    </citation>
    <scope>NUCLEOTIDE SEQUENCE [GENOMIC DNA]</scope>
    <source>
        <strain>RK-1</strain>
    </source>
</reference>
<reference key="2">
    <citation type="journal article" date="2000" name="J. Mol. Evol.">
        <title>The structure and gene repertoire of an ancient red algal plastid genome.</title>
        <authorList>
            <person name="Gloeckner G."/>
            <person name="Rosenthal A."/>
            <person name="Valentin K.-U."/>
        </authorList>
    </citation>
    <scope>NUCLEOTIDE SEQUENCE [LARGE SCALE GENOMIC DNA]</scope>
    <source>
        <strain>RK-1</strain>
    </source>
</reference>
<dbReference type="EMBL" id="Z21723">
    <property type="protein sequence ID" value="CAA79822.2"/>
    <property type="molecule type" value="Genomic_DNA"/>
</dbReference>
<dbReference type="EMBL" id="AF022186">
    <property type="protein sequence ID" value="AAF12959.1"/>
    <property type="status" value="ALT_INIT"/>
    <property type="molecule type" value="Genomic_DNA"/>
</dbReference>
<dbReference type="PIR" id="S31917">
    <property type="entry name" value="S31917"/>
</dbReference>
<dbReference type="RefSeq" id="NP_045135.2">
    <property type="nucleotide sequence ID" value="NC_001840.1"/>
</dbReference>
<dbReference type="SMR" id="P37394"/>
<dbReference type="GeneID" id="800300"/>
<dbReference type="GO" id="GO:0009507">
    <property type="term" value="C:chloroplast"/>
    <property type="evidence" value="ECO:0007669"/>
    <property type="project" value="UniProtKB-SubCell"/>
</dbReference>
<dbReference type="GO" id="GO:0016984">
    <property type="term" value="F:ribulose-bisphosphate carboxylase activity"/>
    <property type="evidence" value="ECO:0007669"/>
    <property type="project" value="UniProtKB-UniRule"/>
</dbReference>
<dbReference type="GO" id="GO:0019253">
    <property type="term" value="P:reductive pentose-phosphate cycle"/>
    <property type="evidence" value="ECO:0007669"/>
    <property type="project" value="UniProtKB-UniRule"/>
</dbReference>
<dbReference type="CDD" id="cd03527">
    <property type="entry name" value="RuBisCO_small"/>
    <property type="match status" value="1"/>
</dbReference>
<dbReference type="Gene3D" id="3.30.190.10">
    <property type="entry name" value="Ribulose bisphosphate carboxylase, small subunit"/>
    <property type="match status" value="1"/>
</dbReference>
<dbReference type="HAMAP" id="MF_00859">
    <property type="entry name" value="RuBisCO_S_bact"/>
    <property type="match status" value="1"/>
</dbReference>
<dbReference type="InterPro" id="IPR024681">
    <property type="entry name" value="RuBisCO_ssu"/>
</dbReference>
<dbReference type="InterPro" id="IPR000894">
    <property type="entry name" value="RuBisCO_ssu_dom"/>
</dbReference>
<dbReference type="InterPro" id="IPR036385">
    <property type="entry name" value="RuBisCO_ssu_sf"/>
</dbReference>
<dbReference type="PANTHER" id="PTHR31262">
    <property type="entry name" value="RIBULOSE BISPHOSPHATE CARBOXYLASE SMALL CHAIN 1, CHLOROPLASTIC"/>
    <property type="match status" value="1"/>
</dbReference>
<dbReference type="PANTHER" id="PTHR31262:SF23">
    <property type="entry name" value="RIBULOSE BISPHOSPHATE CARBOXYLASE SMALL SUBUNIT"/>
    <property type="match status" value="1"/>
</dbReference>
<dbReference type="Pfam" id="PF00101">
    <property type="entry name" value="RuBisCO_small"/>
    <property type="match status" value="1"/>
</dbReference>
<dbReference type="SMART" id="SM00961">
    <property type="entry name" value="RuBisCO_small"/>
    <property type="match status" value="1"/>
</dbReference>
<dbReference type="SUPFAM" id="SSF55239">
    <property type="entry name" value="RuBisCO, small subunit"/>
    <property type="match status" value="1"/>
</dbReference>
<protein>
    <recommendedName>
        <fullName evidence="1">Ribulose bisphosphate carboxylase small subunit</fullName>
        <shortName evidence="1">RuBisCO small subunit</shortName>
    </recommendedName>
</protein>
<proteinExistence type="inferred from homology"/>
<name>RBS_CYACA</name>
<comment type="function">
    <text evidence="1">RuBisCO catalyzes two reactions: the carboxylation of D-ribulose 1,5-bisphosphate, the primary event in carbon dioxide fixation, as well as the oxidative fragmentation of the pentose substrate in the photorespiration process. Both reactions occur simultaneously and in competition at the same active site. Although the small subunit is not catalytic it is essential for maximal activity.</text>
</comment>
<comment type="subunit">
    <text evidence="1">Heterohexadecamer of 8 large and 8 small subunits.</text>
</comment>
<comment type="subcellular location">
    <subcellularLocation>
        <location evidence="1">Plastid</location>
        <location evidence="1">Chloroplast</location>
    </subcellularLocation>
</comment>
<comment type="miscellaneous">
    <text>In this alga, in contrast to plants, the small subunit is encoded in the chloroplast.</text>
</comment>
<comment type="miscellaneous">
    <text evidence="1">The basic functional RuBisCO is composed of a large chain homodimer in a 'head-to-tail' conformation. In form I RuBisCO this homodimer is arranged in a barrel-like tetramer with the small subunits forming a tetrameric 'cap' on each end of the 'barrel'.</text>
</comment>
<comment type="similarity">
    <text evidence="1">Belongs to the RuBisCO small chain family.</text>
</comment>
<comment type="sequence caution" evidence="2">
    <conflict type="erroneous initiation">
        <sequence resource="EMBL-CDS" id="AAF12959"/>
    </conflict>
    <text>Truncated N-terminus.</text>
</comment>
<sequence>MRVTQGTFSFLPDLTNDQIRKQIQYAINKGWALSVEYTDDPHPRNSYWEMWGLPLFDVKDPAAIMFEVEACRKEKSNYYIKLLAFDSTKGVESTAMSFMVNRPAHEPGFVLRRIESNDRVQRYQIHSYATEKPEGERY</sequence>